<sequence length="293" mass="32212">MSLFDWFADRRKGQFVGKVSQETEESDGLWVKCPECGQVVYRKDLHANASVCSNCGYHHRIDSDERIVLIADQGSFKSLDRNLSPTDPLGFKDRRAYADRLRESQASTGMKDGVVTGLCQVEGMPMAMAVMDFRFMGGSMGSVVGEKITRLVERATAQGLPLLIVCASGGARMQEGMLSLMQMAKISGALERHREAELLYMPLLTHPTTGGVTASFAMLGDLILAEPKALIGFAGRRVIEQTLREKLPDNFQTAEYLQEHGFVDTIVPRTQLRKTLASLLLLHGCKAKKAAGK</sequence>
<accession>Q7V839</accession>
<gene>
    <name evidence="1" type="primary">accD</name>
    <name type="ordered locus">PMT_0534</name>
</gene>
<dbReference type="EC" id="2.1.3.15" evidence="1"/>
<dbReference type="EMBL" id="BX548175">
    <property type="protein sequence ID" value="CAE20709.1"/>
    <property type="molecule type" value="Genomic_DNA"/>
</dbReference>
<dbReference type="RefSeq" id="WP_011129913.1">
    <property type="nucleotide sequence ID" value="NC_005071.1"/>
</dbReference>
<dbReference type="SMR" id="Q7V839"/>
<dbReference type="KEGG" id="pmt:PMT_0534"/>
<dbReference type="eggNOG" id="COG0777">
    <property type="taxonomic scope" value="Bacteria"/>
</dbReference>
<dbReference type="HOGENOM" id="CLU_015486_1_1_3"/>
<dbReference type="OrthoDB" id="9772975at2"/>
<dbReference type="UniPathway" id="UPA00655">
    <property type="reaction ID" value="UER00711"/>
</dbReference>
<dbReference type="Proteomes" id="UP000001423">
    <property type="component" value="Chromosome"/>
</dbReference>
<dbReference type="GO" id="GO:0009317">
    <property type="term" value="C:acetyl-CoA carboxylase complex"/>
    <property type="evidence" value="ECO:0007669"/>
    <property type="project" value="InterPro"/>
</dbReference>
<dbReference type="GO" id="GO:0003989">
    <property type="term" value="F:acetyl-CoA carboxylase activity"/>
    <property type="evidence" value="ECO:0007669"/>
    <property type="project" value="InterPro"/>
</dbReference>
<dbReference type="GO" id="GO:0005524">
    <property type="term" value="F:ATP binding"/>
    <property type="evidence" value="ECO:0007669"/>
    <property type="project" value="UniProtKB-KW"/>
</dbReference>
<dbReference type="GO" id="GO:0016743">
    <property type="term" value="F:carboxyl- or carbamoyltransferase activity"/>
    <property type="evidence" value="ECO:0007669"/>
    <property type="project" value="UniProtKB-UniRule"/>
</dbReference>
<dbReference type="GO" id="GO:0008270">
    <property type="term" value="F:zinc ion binding"/>
    <property type="evidence" value="ECO:0007669"/>
    <property type="project" value="UniProtKB-UniRule"/>
</dbReference>
<dbReference type="GO" id="GO:0006633">
    <property type="term" value="P:fatty acid biosynthetic process"/>
    <property type="evidence" value="ECO:0007669"/>
    <property type="project" value="UniProtKB-KW"/>
</dbReference>
<dbReference type="GO" id="GO:2001295">
    <property type="term" value="P:malonyl-CoA biosynthetic process"/>
    <property type="evidence" value="ECO:0007669"/>
    <property type="project" value="UniProtKB-UniRule"/>
</dbReference>
<dbReference type="Gene3D" id="3.90.226.10">
    <property type="entry name" value="2-enoyl-CoA Hydratase, Chain A, domain 1"/>
    <property type="match status" value="1"/>
</dbReference>
<dbReference type="HAMAP" id="MF_01395">
    <property type="entry name" value="AcetylCoA_CT_beta"/>
    <property type="match status" value="1"/>
</dbReference>
<dbReference type="InterPro" id="IPR034733">
    <property type="entry name" value="AcCoA_carboxyl_beta"/>
</dbReference>
<dbReference type="InterPro" id="IPR000438">
    <property type="entry name" value="Acetyl_CoA_COase_Trfase_b_su"/>
</dbReference>
<dbReference type="InterPro" id="IPR029045">
    <property type="entry name" value="ClpP/crotonase-like_dom_sf"/>
</dbReference>
<dbReference type="InterPro" id="IPR011762">
    <property type="entry name" value="COA_CT_N"/>
</dbReference>
<dbReference type="InterPro" id="IPR041010">
    <property type="entry name" value="Znf-ACC"/>
</dbReference>
<dbReference type="NCBIfam" id="TIGR00515">
    <property type="entry name" value="accD"/>
    <property type="match status" value="1"/>
</dbReference>
<dbReference type="PANTHER" id="PTHR42995">
    <property type="entry name" value="ACETYL-COENZYME A CARBOXYLASE CARBOXYL TRANSFERASE SUBUNIT BETA, CHLOROPLASTIC"/>
    <property type="match status" value="1"/>
</dbReference>
<dbReference type="PANTHER" id="PTHR42995:SF5">
    <property type="entry name" value="ACETYL-COENZYME A CARBOXYLASE CARBOXYL TRANSFERASE SUBUNIT BETA, CHLOROPLASTIC"/>
    <property type="match status" value="1"/>
</dbReference>
<dbReference type="Pfam" id="PF01039">
    <property type="entry name" value="Carboxyl_trans"/>
    <property type="match status" value="1"/>
</dbReference>
<dbReference type="Pfam" id="PF17848">
    <property type="entry name" value="Zn_ribbon_ACC"/>
    <property type="match status" value="1"/>
</dbReference>
<dbReference type="PRINTS" id="PR01070">
    <property type="entry name" value="ACCCTRFRASEB"/>
</dbReference>
<dbReference type="SUPFAM" id="SSF52096">
    <property type="entry name" value="ClpP/crotonase"/>
    <property type="match status" value="1"/>
</dbReference>
<dbReference type="PROSITE" id="PS50980">
    <property type="entry name" value="COA_CT_NTER"/>
    <property type="match status" value="1"/>
</dbReference>
<comment type="function">
    <text evidence="1">Component of the acetyl coenzyme A carboxylase (ACC) complex. Biotin carboxylase (BC) catalyzes the carboxylation of biotin on its carrier protein (BCCP) and then the CO(2) group is transferred by the transcarboxylase to acetyl-CoA to form malonyl-CoA.</text>
</comment>
<comment type="catalytic activity">
    <reaction evidence="1">
        <text>N(6)-carboxybiotinyl-L-lysyl-[protein] + acetyl-CoA = N(6)-biotinyl-L-lysyl-[protein] + malonyl-CoA</text>
        <dbReference type="Rhea" id="RHEA:54728"/>
        <dbReference type="Rhea" id="RHEA-COMP:10505"/>
        <dbReference type="Rhea" id="RHEA-COMP:10506"/>
        <dbReference type="ChEBI" id="CHEBI:57288"/>
        <dbReference type="ChEBI" id="CHEBI:57384"/>
        <dbReference type="ChEBI" id="CHEBI:83144"/>
        <dbReference type="ChEBI" id="CHEBI:83145"/>
        <dbReference type="EC" id="2.1.3.15"/>
    </reaction>
</comment>
<comment type="cofactor">
    <cofactor evidence="1">
        <name>Zn(2+)</name>
        <dbReference type="ChEBI" id="CHEBI:29105"/>
    </cofactor>
    <text evidence="1">Binds 1 zinc ion per subunit.</text>
</comment>
<comment type="pathway">
    <text evidence="1">Lipid metabolism; malonyl-CoA biosynthesis; malonyl-CoA from acetyl-CoA: step 1/1.</text>
</comment>
<comment type="subunit">
    <text evidence="1">Acetyl-CoA carboxylase is a heterohexamer composed of biotin carboxyl carrier protein (AccB), biotin carboxylase (AccC) and two subunits each of ACCase subunit alpha (AccA) and ACCase subunit beta (AccD).</text>
</comment>
<comment type="subcellular location">
    <subcellularLocation>
        <location evidence="1">Cytoplasm</location>
    </subcellularLocation>
</comment>
<comment type="similarity">
    <text evidence="1">Belongs to the AccD/PCCB family.</text>
</comment>
<proteinExistence type="inferred from homology"/>
<keyword id="KW-0067">ATP-binding</keyword>
<keyword id="KW-0963">Cytoplasm</keyword>
<keyword id="KW-0275">Fatty acid biosynthesis</keyword>
<keyword id="KW-0276">Fatty acid metabolism</keyword>
<keyword id="KW-0444">Lipid biosynthesis</keyword>
<keyword id="KW-0443">Lipid metabolism</keyword>
<keyword id="KW-0479">Metal-binding</keyword>
<keyword id="KW-0547">Nucleotide-binding</keyword>
<keyword id="KW-1185">Reference proteome</keyword>
<keyword id="KW-0808">Transferase</keyword>
<keyword id="KW-0862">Zinc</keyword>
<keyword id="KW-0863">Zinc-finger</keyword>
<evidence type="ECO:0000255" key="1">
    <source>
        <dbReference type="HAMAP-Rule" id="MF_01395"/>
    </source>
</evidence>
<evidence type="ECO:0000255" key="2">
    <source>
        <dbReference type="PROSITE-ProRule" id="PRU01136"/>
    </source>
</evidence>
<organism>
    <name type="scientific">Prochlorococcus marinus (strain MIT 9313)</name>
    <dbReference type="NCBI Taxonomy" id="74547"/>
    <lineage>
        <taxon>Bacteria</taxon>
        <taxon>Bacillati</taxon>
        <taxon>Cyanobacteriota</taxon>
        <taxon>Cyanophyceae</taxon>
        <taxon>Synechococcales</taxon>
        <taxon>Prochlorococcaceae</taxon>
        <taxon>Prochlorococcus</taxon>
    </lineage>
</organism>
<feature type="chain" id="PRO_0000359024" description="Acetyl-coenzyme A carboxylase carboxyl transferase subunit beta">
    <location>
        <begin position="1"/>
        <end position="293"/>
    </location>
</feature>
<feature type="domain" description="CoA carboxyltransferase N-terminal" evidence="2">
    <location>
        <begin position="29"/>
        <end position="293"/>
    </location>
</feature>
<feature type="zinc finger region" description="C4-type" evidence="1">
    <location>
        <begin position="33"/>
        <end position="55"/>
    </location>
</feature>
<feature type="binding site" evidence="1">
    <location>
        <position position="33"/>
    </location>
    <ligand>
        <name>Zn(2+)</name>
        <dbReference type="ChEBI" id="CHEBI:29105"/>
    </ligand>
</feature>
<feature type="binding site" evidence="1">
    <location>
        <position position="36"/>
    </location>
    <ligand>
        <name>Zn(2+)</name>
        <dbReference type="ChEBI" id="CHEBI:29105"/>
    </ligand>
</feature>
<feature type="binding site" evidence="1">
    <location>
        <position position="52"/>
    </location>
    <ligand>
        <name>Zn(2+)</name>
        <dbReference type="ChEBI" id="CHEBI:29105"/>
    </ligand>
</feature>
<feature type="binding site" evidence="1">
    <location>
        <position position="55"/>
    </location>
    <ligand>
        <name>Zn(2+)</name>
        <dbReference type="ChEBI" id="CHEBI:29105"/>
    </ligand>
</feature>
<name>ACCD_PROMM</name>
<reference key="1">
    <citation type="journal article" date="2003" name="Nature">
        <title>Genome divergence in two Prochlorococcus ecotypes reflects oceanic niche differentiation.</title>
        <authorList>
            <person name="Rocap G."/>
            <person name="Larimer F.W."/>
            <person name="Lamerdin J.E."/>
            <person name="Malfatti S."/>
            <person name="Chain P."/>
            <person name="Ahlgren N.A."/>
            <person name="Arellano A."/>
            <person name="Coleman M."/>
            <person name="Hauser L."/>
            <person name="Hess W.R."/>
            <person name="Johnson Z.I."/>
            <person name="Land M.L."/>
            <person name="Lindell D."/>
            <person name="Post A.F."/>
            <person name="Regala W."/>
            <person name="Shah M."/>
            <person name="Shaw S.L."/>
            <person name="Steglich C."/>
            <person name="Sullivan M.B."/>
            <person name="Ting C.S."/>
            <person name="Tolonen A."/>
            <person name="Webb E.A."/>
            <person name="Zinser E.R."/>
            <person name="Chisholm S.W."/>
        </authorList>
    </citation>
    <scope>NUCLEOTIDE SEQUENCE [LARGE SCALE GENOMIC DNA]</scope>
    <source>
        <strain>MIT 9313</strain>
    </source>
</reference>
<protein>
    <recommendedName>
        <fullName evidence="1">Acetyl-coenzyme A carboxylase carboxyl transferase subunit beta</fullName>
        <shortName evidence="1">ACCase subunit beta</shortName>
        <shortName evidence="1">Acetyl-CoA carboxylase carboxyltransferase subunit beta</shortName>
        <ecNumber evidence="1">2.1.3.15</ecNumber>
    </recommendedName>
</protein>